<proteinExistence type="inferred from homology"/>
<comment type="function">
    <text evidence="1">Digests double-stranded RNA. Involved in the processing of primary rRNA transcript to yield the immediate precursors to the large and small rRNAs (23S and 16S). Processes some mRNAs, and tRNAs when they are encoded in the rRNA operon. Processes pre-crRNA and tracrRNA of type II CRISPR loci if present in the organism.</text>
</comment>
<comment type="catalytic activity">
    <reaction evidence="1">
        <text>Endonucleolytic cleavage to 5'-phosphomonoester.</text>
        <dbReference type="EC" id="3.1.26.3"/>
    </reaction>
</comment>
<comment type="cofactor">
    <cofactor evidence="1">
        <name>Mg(2+)</name>
        <dbReference type="ChEBI" id="CHEBI:18420"/>
    </cofactor>
</comment>
<comment type="subunit">
    <text evidence="1">Homodimer.</text>
</comment>
<comment type="subcellular location">
    <subcellularLocation>
        <location evidence="1">Cytoplasm</location>
    </subcellularLocation>
</comment>
<comment type="similarity">
    <text evidence="1">Belongs to the ribonuclease III family.</text>
</comment>
<reference key="1">
    <citation type="journal article" date="2009" name="BMC Microbiol.">
        <title>The genome sequence of Geobacter metallireducens: features of metabolism, physiology and regulation common and dissimilar to Geobacter sulfurreducens.</title>
        <authorList>
            <person name="Aklujkar M."/>
            <person name="Krushkal J."/>
            <person name="DiBartolo G."/>
            <person name="Lapidus A."/>
            <person name="Land M.L."/>
            <person name="Lovley D.R."/>
        </authorList>
    </citation>
    <scope>NUCLEOTIDE SEQUENCE [LARGE SCALE GENOMIC DNA]</scope>
    <source>
        <strain>ATCC 53774 / DSM 7210 / GS-15</strain>
    </source>
</reference>
<organism>
    <name type="scientific">Geobacter metallireducens (strain ATCC 53774 / DSM 7210 / GS-15)</name>
    <dbReference type="NCBI Taxonomy" id="269799"/>
    <lineage>
        <taxon>Bacteria</taxon>
        <taxon>Pseudomonadati</taxon>
        <taxon>Thermodesulfobacteriota</taxon>
        <taxon>Desulfuromonadia</taxon>
        <taxon>Geobacterales</taxon>
        <taxon>Geobacteraceae</taxon>
        <taxon>Geobacter</taxon>
    </lineage>
</organism>
<feature type="chain" id="PRO_0000228534" description="Ribonuclease 3">
    <location>
        <begin position="1"/>
        <end position="246"/>
    </location>
</feature>
<feature type="domain" description="RNase III" evidence="1">
    <location>
        <begin position="16"/>
        <end position="146"/>
    </location>
</feature>
<feature type="domain" description="DRBM" evidence="1">
    <location>
        <begin position="173"/>
        <end position="242"/>
    </location>
</feature>
<feature type="active site" evidence="1">
    <location>
        <position position="63"/>
    </location>
</feature>
<feature type="active site" evidence="1">
    <location>
        <position position="135"/>
    </location>
</feature>
<feature type="binding site" evidence="1">
    <location>
        <position position="59"/>
    </location>
    <ligand>
        <name>Mg(2+)</name>
        <dbReference type="ChEBI" id="CHEBI:18420"/>
    </ligand>
</feature>
<feature type="binding site" evidence="1">
    <location>
        <position position="132"/>
    </location>
    <ligand>
        <name>Mg(2+)</name>
        <dbReference type="ChEBI" id="CHEBI:18420"/>
    </ligand>
</feature>
<feature type="binding site" evidence="1">
    <location>
        <position position="135"/>
    </location>
    <ligand>
        <name>Mg(2+)</name>
        <dbReference type="ChEBI" id="CHEBI:18420"/>
    </ligand>
</feature>
<sequence length="246" mass="26723">MGERGVEDKSAVQESATELEAGIGYRFVNRQFLAEALTHRSWVNERRGEEGIRDNERLEFLGDAVLGLLVGKMLFARFPQSREGVLARMKASLVGEETLAALASARGLGRHLLLGRGEERSGGRERRSLLANTYEALLAAVYLDGGLGPVERIVEQDFSPLLAGIASGATGRDFKTEFQEMVQTRFGTAPTYELIATDGPPHDRRFTVIAMVAGKRMGEGAGRSKKEAEQAAARQVLARFAAEGEG</sequence>
<protein>
    <recommendedName>
        <fullName evidence="1">Ribonuclease 3</fullName>
        <ecNumber evidence="1">3.1.26.3</ecNumber>
    </recommendedName>
    <alternativeName>
        <fullName evidence="1">Ribonuclease III</fullName>
        <shortName evidence="1">RNase III</shortName>
    </alternativeName>
</protein>
<evidence type="ECO:0000255" key="1">
    <source>
        <dbReference type="HAMAP-Rule" id="MF_00104"/>
    </source>
</evidence>
<name>RNC_GEOMG</name>
<accession>Q39T82</accession>
<dbReference type="EC" id="3.1.26.3" evidence="1"/>
<dbReference type="EMBL" id="CP000148">
    <property type="protein sequence ID" value="ABB32542.1"/>
    <property type="molecule type" value="Genomic_DNA"/>
</dbReference>
<dbReference type="RefSeq" id="WP_004513303.1">
    <property type="nucleotide sequence ID" value="NC_007517.1"/>
</dbReference>
<dbReference type="SMR" id="Q39T82"/>
<dbReference type="STRING" id="269799.Gmet_2317"/>
<dbReference type="KEGG" id="gme:Gmet_2317"/>
<dbReference type="eggNOG" id="COG0571">
    <property type="taxonomic scope" value="Bacteria"/>
</dbReference>
<dbReference type="HOGENOM" id="CLU_000907_1_3_7"/>
<dbReference type="Proteomes" id="UP000007073">
    <property type="component" value="Chromosome"/>
</dbReference>
<dbReference type="GO" id="GO:0005737">
    <property type="term" value="C:cytoplasm"/>
    <property type="evidence" value="ECO:0007669"/>
    <property type="project" value="UniProtKB-SubCell"/>
</dbReference>
<dbReference type="GO" id="GO:0003725">
    <property type="term" value="F:double-stranded RNA binding"/>
    <property type="evidence" value="ECO:0007669"/>
    <property type="project" value="TreeGrafter"/>
</dbReference>
<dbReference type="GO" id="GO:0046872">
    <property type="term" value="F:metal ion binding"/>
    <property type="evidence" value="ECO:0007669"/>
    <property type="project" value="UniProtKB-KW"/>
</dbReference>
<dbReference type="GO" id="GO:0004525">
    <property type="term" value="F:ribonuclease III activity"/>
    <property type="evidence" value="ECO:0007669"/>
    <property type="project" value="UniProtKB-UniRule"/>
</dbReference>
<dbReference type="GO" id="GO:0019843">
    <property type="term" value="F:rRNA binding"/>
    <property type="evidence" value="ECO:0007669"/>
    <property type="project" value="UniProtKB-KW"/>
</dbReference>
<dbReference type="GO" id="GO:0006397">
    <property type="term" value="P:mRNA processing"/>
    <property type="evidence" value="ECO:0007669"/>
    <property type="project" value="UniProtKB-UniRule"/>
</dbReference>
<dbReference type="GO" id="GO:0010468">
    <property type="term" value="P:regulation of gene expression"/>
    <property type="evidence" value="ECO:0007669"/>
    <property type="project" value="TreeGrafter"/>
</dbReference>
<dbReference type="GO" id="GO:0006364">
    <property type="term" value="P:rRNA processing"/>
    <property type="evidence" value="ECO:0007669"/>
    <property type="project" value="UniProtKB-UniRule"/>
</dbReference>
<dbReference type="GO" id="GO:0008033">
    <property type="term" value="P:tRNA processing"/>
    <property type="evidence" value="ECO:0007669"/>
    <property type="project" value="UniProtKB-KW"/>
</dbReference>
<dbReference type="CDD" id="cd10845">
    <property type="entry name" value="DSRM_RNAse_III_family"/>
    <property type="match status" value="1"/>
</dbReference>
<dbReference type="CDD" id="cd00593">
    <property type="entry name" value="RIBOc"/>
    <property type="match status" value="1"/>
</dbReference>
<dbReference type="FunFam" id="1.10.1520.10:FF:000001">
    <property type="entry name" value="Ribonuclease 3"/>
    <property type="match status" value="1"/>
</dbReference>
<dbReference type="FunFam" id="3.30.160.20:FF:000003">
    <property type="entry name" value="Ribonuclease 3"/>
    <property type="match status" value="1"/>
</dbReference>
<dbReference type="Gene3D" id="3.30.160.20">
    <property type="match status" value="1"/>
</dbReference>
<dbReference type="Gene3D" id="1.10.1520.10">
    <property type="entry name" value="Ribonuclease III domain"/>
    <property type="match status" value="1"/>
</dbReference>
<dbReference type="HAMAP" id="MF_00104">
    <property type="entry name" value="RNase_III"/>
    <property type="match status" value="1"/>
</dbReference>
<dbReference type="InterPro" id="IPR014720">
    <property type="entry name" value="dsRBD_dom"/>
</dbReference>
<dbReference type="InterPro" id="IPR011907">
    <property type="entry name" value="RNase_III"/>
</dbReference>
<dbReference type="InterPro" id="IPR000999">
    <property type="entry name" value="RNase_III_dom"/>
</dbReference>
<dbReference type="InterPro" id="IPR036389">
    <property type="entry name" value="RNase_III_sf"/>
</dbReference>
<dbReference type="NCBIfam" id="TIGR02191">
    <property type="entry name" value="RNaseIII"/>
    <property type="match status" value="1"/>
</dbReference>
<dbReference type="PANTHER" id="PTHR11207:SF0">
    <property type="entry name" value="RIBONUCLEASE 3"/>
    <property type="match status" value="1"/>
</dbReference>
<dbReference type="PANTHER" id="PTHR11207">
    <property type="entry name" value="RIBONUCLEASE III"/>
    <property type="match status" value="1"/>
</dbReference>
<dbReference type="Pfam" id="PF00035">
    <property type="entry name" value="dsrm"/>
    <property type="match status" value="1"/>
</dbReference>
<dbReference type="Pfam" id="PF14622">
    <property type="entry name" value="Ribonucleas_3_3"/>
    <property type="match status" value="1"/>
</dbReference>
<dbReference type="SMART" id="SM00358">
    <property type="entry name" value="DSRM"/>
    <property type="match status" value="1"/>
</dbReference>
<dbReference type="SMART" id="SM00535">
    <property type="entry name" value="RIBOc"/>
    <property type="match status" value="1"/>
</dbReference>
<dbReference type="SUPFAM" id="SSF54768">
    <property type="entry name" value="dsRNA-binding domain-like"/>
    <property type="match status" value="1"/>
</dbReference>
<dbReference type="SUPFAM" id="SSF69065">
    <property type="entry name" value="RNase III domain-like"/>
    <property type="match status" value="1"/>
</dbReference>
<dbReference type="PROSITE" id="PS50137">
    <property type="entry name" value="DS_RBD"/>
    <property type="match status" value="1"/>
</dbReference>
<dbReference type="PROSITE" id="PS00517">
    <property type="entry name" value="RNASE_3_1"/>
    <property type="match status" value="1"/>
</dbReference>
<dbReference type="PROSITE" id="PS50142">
    <property type="entry name" value="RNASE_3_2"/>
    <property type="match status" value="1"/>
</dbReference>
<gene>
    <name evidence="1" type="primary">rnc</name>
    <name type="ordered locus">Gmet_2317</name>
</gene>
<keyword id="KW-0963">Cytoplasm</keyword>
<keyword id="KW-0255">Endonuclease</keyword>
<keyword id="KW-0378">Hydrolase</keyword>
<keyword id="KW-0460">Magnesium</keyword>
<keyword id="KW-0479">Metal-binding</keyword>
<keyword id="KW-0507">mRNA processing</keyword>
<keyword id="KW-0540">Nuclease</keyword>
<keyword id="KW-1185">Reference proteome</keyword>
<keyword id="KW-0694">RNA-binding</keyword>
<keyword id="KW-0698">rRNA processing</keyword>
<keyword id="KW-0699">rRNA-binding</keyword>
<keyword id="KW-0819">tRNA processing</keyword>